<organism>
    <name type="scientific">Haemophilus influenzae (strain ATCC 51907 / DSM 11121 / KW20 / Rd)</name>
    <dbReference type="NCBI Taxonomy" id="71421"/>
    <lineage>
        <taxon>Bacteria</taxon>
        <taxon>Pseudomonadati</taxon>
        <taxon>Pseudomonadota</taxon>
        <taxon>Gammaproteobacteria</taxon>
        <taxon>Pasteurellales</taxon>
        <taxon>Pasteurellaceae</taxon>
        <taxon>Haemophilus</taxon>
    </lineage>
</organism>
<name>Y1411_HAEIN</name>
<accession>Q57374</accession>
<accession>O05060</accession>
<proteinExistence type="predicted"/>
<dbReference type="EMBL" id="L42023">
    <property type="protein sequence ID" value="AAC23059.1"/>
    <property type="molecule type" value="Genomic_DNA"/>
</dbReference>
<dbReference type="PIR" id="C64122">
    <property type="entry name" value="C64122"/>
</dbReference>
<dbReference type="RefSeq" id="NP_439562.1">
    <property type="nucleotide sequence ID" value="NC_000907.1"/>
</dbReference>
<dbReference type="SMR" id="Q57374"/>
<dbReference type="STRING" id="71421.HI_1411"/>
<dbReference type="EnsemblBacteria" id="AAC23059">
    <property type="protein sequence ID" value="AAC23059"/>
    <property type="gene ID" value="HI_1411"/>
</dbReference>
<dbReference type="KEGG" id="hin:HI_1411"/>
<dbReference type="PATRIC" id="fig|71421.8.peg.1470"/>
<dbReference type="eggNOG" id="COG3728">
    <property type="taxonomic scope" value="Bacteria"/>
</dbReference>
<dbReference type="HOGENOM" id="CLU_064914_2_1_6"/>
<dbReference type="OrthoDB" id="8227562at2"/>
<dbReference type="BioCyc" id="HINF71421:G1GJ1-1435-MONOMER"/>
<dbReference type="Proteomes" id="UP000000579">
    <property type="component" value="Chromosome"/>
</dbReference>
<dbReference type="GO" id="GO:0051276">
    <property type="term" value="P:chromosome organization"/>
    <property type="evidence" value="ECO:0007669"/>
    <property type="project" value="InterPro"/>
</dbReference>
<dbReference type="Gene3D" id="1.10.10.1400">
    <property type="entry name" value="Terminase, small subunit, N-terminal DNA-binding domain, HTH motif"/>
    <property type="match status" value="1"/>
</dbReference>
<dbReference type="InterPro" id="IPR038713">
    <property type="entry name" value="Terminase_Gp1_N_sf"/>
</dbReference>
<dbReference type="InterPro" id="IPR005335">
    <property type="entry name" value="Terminase_ssu"/>
</dbReference>
<dbReference type="Pfam" id="PF03592">
    <property type="entry name" value="Terminase_2"/>
    <property type="match status" value="1"/>
</dbReference>
<protein>
    <recommendedName>
        <fullName>Uncharacterized protein HI_1411</fullName>
    </recommendedName>
</protein>
<gene>
    <name type="ordered locus">HI_1411</name>
</gene>
<keyword id="KW-1185">Reference proteome</keyword>
<sequence>MSDVKGKSTSGRGLTPKQEKFCQLYIELGNASEAYRQSYDCSKMTTEVINVKASELLNKNGKITVRVEELRQAHQQRHNLTLDNIIADLQEYRDICMGRKPLTITTVVKNAQEGTAQSVNTECFVFEPTGANKALELLGKHLGMFTNKVDVTTDGKPLPTVINVTFSDEPA</sequence>
<reference key="1">
    <citation type="journal article" date="1995" name="Science">
        <title>Whole-genome random sequencing and assembly of Haemophilus influenzae Rd.</title>
        <authorList>
            <person name="Fleischmann R.D."/>
            <person name="Adams M.D."/>
            <person name="White O."/>
            <person name="Clayton R.A."/>
            <person name="Kirkness E.F."/>
            <person name="Kerlavage A.R."/>
            <person name="Bult C.J."/>
            <person name="Tomb J.-F."/>
            <person name="Dougherty B.A."/>
            <person name="Merrick J.M."/>
            <person name="McKenney K."/>
            <person name="Sutton G.G."/>
            <person name="FitzHugh W."/>
            <person name="Fields C.A."/>
            <person name="Gocayne J.D."/>
            <person name="Scott J.D."/>
            <person name="Shirley R."/>
            <person name="Liu L.-I."/>
            <person name="Glodek A."/>
            <person name="Kelley J.M."/>
            <person name="Weidman J.F."/>
            <person name="Phillips C.A."/>
            <person name="Spriggs T."/>
            <person name="Hedblom E."/>
            <person name="Cotton M.D."/>
            <person name="Utterback T.R."/>
            <person name="Hanna M.C."/>
            <person name="Nguyen D.T."/>
            <person name="Saudek D.M."/>
            <person name="Brandon R.C."/>
            <person name="Fine L.D."/>
            <person name="Fritchman J.L."/>
            <person name="Fuhrmann J.L."/>
            <person name="Geoghagen N.S.M."/>
            <person name="Gnehm C.L."/>
            <person name="McDonald L.A."/>
            <person name="Small K.V."/>
            <person name="Fraser C.M."/>
            <person name="Smith H.O."/>
            <person name="Venter J.C."/>
        </authorList>
    </citation>
    <scope>NUCLEOTIDE SEQUENCE [LARGE SCALE GENOMIC DNA]</scope>
    <source>
        <strain>ATCC 51907 / DSM 11121 / KW20 / Rd</strain>
    </source>
</reference>
<feature type="chain" id="PRO_0000078048" description="Uncharacterized protein HI_1411">
    <location>
        <begin position="1"/>
        <end position="171"/>
    </location>
</feature>